<dbReference type="EC" id="3.5.99.6" evidence="1"/>
<dbReference type="EMBL" id="CP000720">
    <property type="protein sequence ID" value="ABS47729.1"/>
    <property type="molecule type" value="Genomic_DNA"/>
</dbReference>
<dbReference type="RefSeq" id="WP_012105502.1">
    <property type="nucleotide sequence ID" value="NC_009708.1"/>
</dbReference>
<dbReference type="SMR" id="A7FKU3"/>
<dbReference type="KEGG" id="ypi:YpsIP31758_2909"/>
<dbReference type="HOGENOM" id="CLU_049611_0_1_6"/>
<dbReference type="UniPathway" id="UPA00629">
    <property type="reaction ID" value="UER00684"/>
</dbReference>
<dbReference type="Proteomes" id="UP000002412">
    <property type="component" value="Chromosome"/>
</dbReference>
<dbReference type="GO" id="GO:0005737">
    <property type="term" value="C:cytoplasm"/>
    <property type="evidence" value="ECO:0007669"/>
    <property type="project" value="TreeGrafter"/>
</dbReference>
<dbReference type="GO" id="GO:0004342">
    <property type="term" value="F:glucosamine-6-phosphate deaminase activity"/>
    <property type="evidence" value="ECO:0007669"/>
    <property type="project" value="UniProtKB-UniRule"/>
</dbReference>
<dbReference type="GO" id="GO:0042802">
    <property type="term" value="F:identical protein binding"/>
    <property type="evidence" value="ECO:0007669"/>
    <property type="project" value="TreeGrafter"/>
</dbReference>
<dbReference type="GO" id="GO:0005975">
    <property type="term" value="P:carbohydrate metabolic process"/>
    <property type="evidence" value="ECO:0007669"/>
    <property type="project" value="InterPro"/>
</dbReference>
<dbReference type="GO" id="GO:0006043">
    <property type="term" value="P:glucosamine catabolic process"/>
    <property type="evidence" value="ECO:0007669"/>
    <property type="project" value="TreeGrafter"/>
</dbReference>
<dbReference type="GO" id="GO:0006046">
    <property type="term" value="P:N-acetylglucosamine catabolic process"/>
    <property type="evidence" value="ECO:0007669"/>
    <property type="project" value="TreeGrafter"/>
</dbReference>
<dbReference type="GO" id="GO:0019262">
    <property type="term" value="P:N-acetylneuraminate catabolic process"/>
    <property type="evidence" value="ECO:0007669"/>
    <property type="project" value="UniProtKB-UniRule"/>
</dbReference>
<dbReference type="CDD" id="cd01399">
    <property type="entry name" value="GlcN6P_deaminase"/>
    <property type="match status" value="1"/>
</dbReference>
<dbReference type="FunFam" id="3.40.50.1360:FF:000002">
    <property type="entry name" value="Glucosamine-6-phosphate deaminase"/>
    <property type="match status" value="1"/>
</dbReference>
<dbReference type="Gene3D" id="3.40.50.1360">
    <property type="match status" value="1"/>
</dbReference>
<dbReference type="HAMAP" id="MF_01241">
    <property type="entry name" value="GlcN6P_deamin"/>
    <property type="match status" value="1"/>
</dbReference>
<dbReference type="InterPro" id="IPR006148">
    <property type="entry name" value="Glc/Gal-6P_isomerase"/>
</dbReference>
<dbReference type="InterPro" id="IPR004547">
    <property type="entry name" value="Glucosamine6P_isomerase"/>
</dbReference>
<dbReference type="InterPro" id="IPR018321">
    <property type="entry name" value="Glucosamine6P_isomerase_CS"/>
</dbReference>
<dbReference type="InterPro" id="IPR037171">
    <property type="entry name" value="NagB/RpiA_transferase-like"/>
</dbReference>
<dbReference type="NCBIfam" id="TIGR00502">
    <property type="entry name" value="nagB"/>
    <property type="match status" value="1"/>
</dbReference>
<dbReference type="NCBIfam" id="NF001685">
    <property type="entry name" value="PRK00443.1-5"/>
    <property type="match status" value="1"/>
</dbReference>
<dbReference type="PANTHER" id="PTHR11280">
    <property type="entry name" value="GLUCOSAMINE-6-PHOSPHATE ISOMERASE"/>
    <property type="match status" value="1"/>
</dbReference>
<dbReference type="PANTHER" id="PTHR11280:SF5">
    <property type="entry name" value="GLUCOSAMINE-6-PHOSPHATE ISOMERASE"/>
    <property type="match status" value="1"/>
</dbReference>
<dbReference type="Pfam" id="PF01182">
    <property type="entry name" value="Glucosamine_iso"/>
    <property type="match status" value="1"/>
</dbReference>
<dbReference type="SUPFAM" id="SSF100950">
    <property type="entry name" value="NagB/RpiA/CoA transferase-like"/>
    <property type="match status" value="1"/>
</dbReference>
<dbReference type="PROSITE" id="PS01161">
    <property type="entry name" value="GLC_GALNAC_ISOMERASE"/>
    <property type="match status" value="1"/>
</dbReference>
<accession>A7FKU3</accession>
<organism>
    <name type="scientific">Yersinia pseudotuberculosis serotype O:1b (strain IP 31758)</name>
    <dbReference type="NCBI Taxonomy" id="349747"/>
    <lineage>
        <taxon>Bacteria</taxon>
        <taxon>Pseudomonadati</taxon>
        <taxon>Pseudomonadota</taxon>
        <taxon>Gammaproteobacteria</taxon>
        <taxon>Enterobacterales</taxon>
        <taxon>Yersiniaceae</taxon>
        <taxon>Yersinia</taxon>
    </lineage>
</organism>
<sequence>MRLIPLRNTAEVGKWAARHIVNRINAFKPTAERPFILGLPTGGTPMEAYKHLIAMHKAGEVSFKHVVTFNMDEYVGLPKEHPESYYTFMHTNFFDHVDIPAENINLLNGNAADIDAECRRYEEKIKSYGKIHLFMGGVGVDGHIAFNEPASSLASRTRIKTLTQETRIANSRFFGGDANLVPKYALTVGVGTLLDAEEVMILVTGHGKAQALQAAVEGSINHMWTISCLQLHAKAIMVCDEPSTMELKVKTVKYFRELEAENVKDL</sequence>
<proteinExistence type="inferred from homology"/>
<comment type="function">
    <text evidence="1">Catalyzes the reversible isomerization-deamination of glucosamine 6-phosphate (GlcN6P) to form fructose 6-phosphate (Fru6P) and ammonium ion.</text>
</comment>
<comment type="catalytic activity">
    <reaction evidence="1">
        <text>alpha-D-glucosamine 6-phosphate + H2O = beta-D-fructose 6-phosphate + NH4(+)</text>
        <dbReference type="Rhea" id="RHEA:12172"/>
        <dbReference type="ChEBI" id="CHEBI:15377"/>
        <dbReference type="ChEBI" id="CHEBI:28938"/>
        <dbReference type="ChEBI" id="CHEBI:57634"/>
        <dbReference type="ChEBI" id="CHEBI:75989"/>
        <dbReference type="EC" id="3.5.99.6"/>
    </reaction>
</comment>
<comment type="activity regulation">
    <text evidence="1">Allosterically activated by N-acetylglucosamine 6-phosphate (GlcNAc6P).</text>
</comment>
<comment type="pathway">
    <text evidence="1">Amino-sugar metabolism; N-acetylneuraminate degradation; D-fructose 6-phosphate from N-acetylneuraminate: step 5/5.</text>
</comment>
<comment type="subunit">
    <text evidence="1">Homohexamer.</text>
</comment>
<comment type="similarity">
    <text evidence="1">Belongs to the glucosamine/galactosamine-6-phosphate isomerase family. NagB subfamily.</text>
</comment>
<gene>
    <name evidence="1" type="primary">nagB</name>
    <name type="ordered locus">YpsIP31758_2909</name>
</gene>
<protein>
    <recommendedName>
        <fullName evidence="1">Glucosamine-6-phosphate deaminase</fullName>
        <ecNumber evidence="1">3.5.99.6</ecNumber>
    </recommendedName>
    <alternativeName>
        <fullName evidence="1">GlcN6P deaminase</fullName>
        <shortName evidence="1">GNPDA</shortName>
    </alternativeName>
    <alternativeName>
        <fullName evidence="1">Glucosamine-6-phosphate isomerase</fullName>
    </alternativeName>
</protein>
<feature type="chain" id="PRO_1000067037" description="Glucosamine-6-phosphate deaminase">
    <location>
        <begin position="1"/>
        <end position="266"/>
    </location>
</feature>
<feature type="active site" description="Proton acceptor; for enolization step" evidence="1">
    <location>
        <position position="72"/>
    </location>
</feature>
<feature type="active site" description="For ring-opening step" evidence="1">
    <location>
        <position position="141"/>
    </location>
</feature>
<feature type="active site" description="Proton acceptor; for ring-opening step" evidence="1">
    <location>
        <position position="143"/>
    </location>
</feature>
<feature type="active site" description="For ring-opening step" evidence="1">
    <location>
        <position position="148"/>
    </location>
</feature>
<feature type="site" description="Part of the allosteric site" evidence="1">
    <location>
        <position position="151"/>
    </location>
</feature>
<feature type="site" description="Part of the allosteric site" evidence="1">
    <location>
        <position position="158"/>
    </location>
</feature>
<feature type="site" description="Part of the allosteric site" evidence="1">
    <location>
        <position position="160"/>
    </location>
</feature>
<feature type="site" description="Part of the allosteric site" evidence="1">
    <location>
        <position position="161"/>
    </location>
</feature>
<feature type="site" description="Part of the allosteric site" evidence="1">
    <location>
        <position position="254"/>
    </location>
</feature>
<keyword id="KW-0021">Allosteric enzyme</keyword>
<keyword id="KW-0119">Carbohydrate metabolism</keyword>
<keyword id="KW-0378">Hydrolase</keyword>
<name>NAGB_YERP3</name>
<reference key="1">
    <citation type="journal article" date="2007" name="PLoS Genet.">
        <title>The complete genome sequence of Yersinia pseudotuberculosis IP31758, the causative agent of Far East scarlet-like fever.</title>
        <authorList>
            <person name="Eppinger M."/>
            <person name="Rosovitz M.J."/>
            <person name="Fricke W.F."/>
            <person name="Rasko D.A."/>
            <person name="Kokorina G."/>
            <person name="Fayolle C."/>
            <person name="Lindler L.E."/>
            <person name="Carniel E."/>
            <person name="Ravel J."/>
        </authorList>
    </citation>
    <scope>NUCLEOTIDE SEQUENCE [LARGE SCALE GENOMIC DNA]</scope>
    <source>
        <strain>IP 31758</strain>
    </source>
</reference>
<evidence type="ECO:0000255" key="1">
    <source>
        <dbReference type="HAMAP-Rule" id="MF_01241"/>
    </source>
</evidence>